<sequence length="204" mass="23438">MNSFKNFLKEWGLFLLILSLLALSRIFFWSNVRVEGHSMDPTLADGEILFVVKHLPIDRFDIVVAHEEDGNKDIVKRVIGMPGDTIRYENDKLYINDKETDEPYLADYIKRFKDDKLQSTYSGKGFEGNKGTFFRSIAQKAQAFTVDVNYNTNFSFTVPEGEYLLLGDDRLVSSDSRHVGTFKAKDITGEAKFRLWPITRIGTF</sequence>
<comment type="catalytic activity">
    <reaction>
        <text>Cleavage of hydrophobic, N-terminal signal or leader sequences from secreted and periplasmic proteins.</text>
        <dbReference type="EC" id="3.4.21.89"/>
    </reaction>
</comment>
<comment type="subcellular location">
    <subcellularLocation>
        <location evidence="3">Cell membrane</location>
        <topology evidence="3">Single-pass type II membrane protein</topology>
    </subcellularLocation>
</comment>
<comment type="similarity">
    <text evidence="3">Belongs to the peptidase S26 family.</text>
</comment>
<reference key="1">
    <citation type="journal article" date="1997" name="Gene">
        <title>Analysis of a Streptococcus pneumoniae gene encoding signal peptidase I and overproduction of the enzyme.</title>
        <authorList>
            <person name="Zhang Y.-B."/>
            <person name="Greenberg B."/>
            <person name="Lacks S.A."/>
        </authorList>
    </citation>
    <scope>NUCLEOTIDE SEQUENCE [GENOMIC DNA]</scope>
    <source>
        <strain>533</strain>
    </source>
</reference>
<reference key="2">
    <citation type="journal article" date="2001" name="Science">
        <title>Complete genome sequence of a virulent isolate of Streptococcus pneumoniae.</title>
        <authorList>
            <person name="Tettelin H."/>
            <person name="Nelson K.E."/>
            <person name="Paulsen I.T."/>
            <person name="Eisen J.A."/>
            <person name="Read T.D."/>
            <person name="Peterson S.N."/>
            <person name="Heidelberg J.F."/>
            <person name="DeBoy R.T."/>
            <person name="Haft D.H."/>
            <person name="Dodson R.J."/>
            <person name="Durkin A.S."/>
            <person name="Gwinn M.L."/>
            <person name="Kolonay J.F."/>
            <person name="Nelson W.C."/>
            <person name="Peterson J.D."/>
            <person name="Umayam L.A."/>
            <person name="White O."/>
            <person name="Salzberg S.L."/>
            <person name="Lewis M.R."/>
            <person name="Radune D."/>
            <person name="Holtzapple E.K."/>
            <person name="Khouri H.M."/>
            <person name="Wolf A.M."/>
            <person name="Utterback T.R."/>
            <person name="Hansen C.L."/>
            <person name="McDonald L.A."/>
            <person name="Feldblyum T.V."/>
            <person name="Angiuoli S.V."/>
            <person name="Dickinson T."/>
            <person name="Hickey E.K."/>
            <person name="Holt I.E."/>
            <person name="Loftus B.J."/>
            <person name="Yang F."/>
            <person name="Smith H.O."/>
            <person name="Venter J.C."/>
            <person name="Dougherty B.A."/>
            <person name="Morrison D.A."/>
            <person name="Hollingshead S.K."/>
            <person name="Fraser C.M."/>
        </authorList>
    </citation>
    <scope>NUCLEOTIDE SEQUENCE [LARGE SCALE GENOMIC DNA]</scope>
    <source>
        <strain>ATCC BAA-334 / TIGR4</strain>
    </source>
</reference>
<proteinExistence type="inferred from homology"/>
<dbReference type="EC" id="3.4.21.89"/>
<dbReference type="EMBL" id="U90721">
    <property type="protein sequence ID" value="AAB69116.1"/>
    <property type="molecule type" value="Genomic_DNA"/>
</dbReference>
<dbReference type="EMBL" id="AE005672">
    <property type="protein sequence ID" value="AAK74565.1"/>
    <property type="molecule type" value="Genomic_DNA"/>
</dbReference>
<dbReference type="PIR" id="D95046">
    <property type="entry name" value="D95046"/>
</dbReference>
<dbReference type="PIR" id="D97917">
    <property type="entry name" value="D97917"/>
</dbReference>
<dbReference type="RefSeq" id="WP_001820908.1">
    <property type="nucleotide sequence ID" value="NZ_CP155539.1"/>
</dbReference>
<dbReference type="SMR" id="O07344"/>
<dbReference type="MEROPS" id="S26.015"/>
<dbReference type="PaxDb" id="170187-SP_0402"/>
<dbReference type="DNASU" id="930336"/>
<dbReference type="EnsemblBacteria" id="AAK74565">
    <property type="protein sequence ID" value="AAK74565"/>
    <property type="gene ID" value="SP_0402"/>
</dbReference>
<dbReference type="KEGG" id="spn:SP_0402"/>
<dbReference type="eggNOG" id="COG0681">
    <property type="taxonomic scope" value="Bacteria"/>
</dbReference>
<dbReference type="PhylomeDB" id="O07344"/>
<dbReference type="BioCyc" id="SPNE170187:G1FZB-418-MONOMER"/>
<dbReference type="Proteomes" id="UP000000585">
    <property type="component" value="Chromosome"/>
</dbReference>
<dbReference type="GO" id="GO:0005886">
    <property type="term" value="C:plasma membrane"/>
    <property type="evidence" value="ECO:0007669"/>
    <property type="project" value="UniProtKB-SubCell"/>
</dbReference>
<dbReference type="GO" id="GO:0004252">
    <property type="term" value="F:serine-type endopeptidase activity"/>
    <property type="evidence" value="ECO:0007669"/>
    <property type="project" value="UniProtKB-EC"/>
</dbReference>
<dbReference type="GO" id="GO:0006465">
    <property type="term" value="P:signal peptide processing"/>
    <property type="evidence" value="ECO:0007669"/>
    <property type="project" value="InterPro"/>
</dbReference>
<dbReference type="CDD" id="cd06462">
    <property type="entry name" value="Peptidase_S24_S26"/>
    <property type="match status" value="1"/>
</dbReference>
<dbReference type="FunFam" id="2.10.109.10:FF:000027">
    <property type="entry name" value="Signal peptidase I"/>
    <property type="match status" value="1"/>
</dbReference>
<dbReference type="Gene3D" id="2.10.109.10">
    <property type="entry name" value="Umud Fragment, subunit A"/>
    <property type="match status" value="1"/>
</dbReference>
<dbReference type="InterPro" id="IPR036286">
    <property type="entry name" value="LexA/Signal_pep-like_sf"/>
</dbReference>
<dbReference type="InterPro" id="IPR000223">
    <property type="entry name" value="Pept_S26A_signal_pept_1"/>
</dbReference>
<dbReference type="InterPro" id="IPR019757">
    <property type="entry name" value="Pept_S26A_signal_pept_1_Lys-AS"/>
</dbReference>
<dbReference type="InterPro" id="IPR019756">
    <property type="entry name" value="Pept_S26A_signal_pept_1_Ser-AS"/>
</dbReference>
<dbReference type="InterPro" id="IPR019533">
    <property type="entry name" value="Peptidase_S26"/>
</dbReference>
<dbReference type="NCBIfam" id="TIGR02227">
    <property type="entry name" value="sigpep_I_bact"/>
    <property type="match status" value="1"/>
</dbReference>
<dbReference type="PANTHER" id="PTHR43390:SF1">
    <property type="entry name" value="CHLOROPLAST PROCESSING PEPTIDASE"/>
    <property type="match status" value="1"/>
</dbReference>
<dbReference type="PANTHER" id="PTHR43390">
    <property type="entry name" value="SIGNAL PEPTIDASE I"/>
    <property type="match status" value="1"/>
</dbReference>
<dbReference type="Pfam" id="PF10502">
    <property type="entry name" value="Peptidase_S26"/>
    <property type="match status" value="1"/>
</dbReference>
<dbReference type="PRINTS" id="PR00727">
    <property type="entry name" value="LEADERPTASE"/>
</dbReference>
<dbReference type="SUPFAM" id="SSF51306">
    <property type="entry name" value="LexA/Signal peptidase"/>
    <property type="match status" value="1"/>
</dbReference>
<dbReference type="PROSITE" id="PS00501">
    <property type="entry name" value="SPASE_I_1"/>
    <property type="match status" value="1"/>
</dbReference>
<dbReference type="PROSITE" id="PS00760">
    <property type="entry name" value="SPASE_I_2"/>
    <property type="match status" value="1"/>
</dbReference>
<organism>
    <name type="scientific">Streptococcus pneumoniae serotype 4 (strain ATCC BAA-334 / TIGR4)</name>
    <dbReference type="NCBI Taxonomy" id="170187"/>
    <lineage>
        <taxon>Bacteria</taxon>
        <taxon>Bacillati</taxon>
        <taxon>Bacillota</taxon>
        <taxon>Bacilli</taxon>
        <taxon>Lactobacillales</taxon>
        <taxon>Streptococcaceae</taxon>
        <taxon>Streptococcus</taxon>
    </lineage>
</organism>
<evidence type="ECO:0000250" key="1"/>
<evidence type="ECO:0000255" key="2"/>
<evidence type="ECO:0000305" key="3"/>
<accession>O07344</accession>
<feature type="chain" id="PRO_0000109533" description="Signal peptidase I">
    <location>
        <begin position="1"/>
        <end position="204"/>
    </location>
</feature>
<feature type="topological domain" description="Cytoplasmic" evidence="2">
    <location>
        <begin position="1"/>
        <end position="10"/>
    </location>
</feature>
<feature type="transmembrane region" description="Helical" evidence="2">
    <location>
        <begin position="11"/>
        <end position="30"/>
    </location>
</feature>
<feature type="topological domain" description="Extracellular" evidence="2">
    <location>
        <begin position="31"/>
        <end position="204"/>
    </location>
</feature>
<feature type="active site" evidence="1">
    <location>
        <position position="38"/>
    </location>
</feature>
<feature type="active site" evidence="1">
    <location>
        <position position="76"/>
    </location>
</feature>
<feature type="sequence conflict" description="In Ref. 1; AAB69116." evidence="3" ref="1">
    <original>S</original>
    <variation>L</variation>
    <location>
        <position position="3"/>
    </location>
</feature>
<feature type="sequence conflict" description="In Ref. 1; AAB69116." evidence="3" ref="1">
    <original>L</original>
    <variation>F</variation>
    <location>
        <position position="195"/>
    </location>
</feature>
<gene>
    <name type="primary">lepB</name>
    <name type="synonym">spi</name>
    <name type="ordered locus">SP_0402</name>
</gene>
<name>LEP_STRPN</name>
<protein>
    <recommendedName>
        <fullName>Signal peptidase I</fullName>
        <shortName>SPase I</shortName>
        <ecNumber>3.4.21.89</ecNumber>
    </recommendedName>
    <alternativeName>
        <fullName>Leader peptidase I</fullName>
    </alternativeName>
</protein>
<keyword id="KW-1003">Cell membrane</keyword>
<keyword id="KW-0378">Hydrolase</keyword>
<keyword id="KW-0472">Membrane</keyword>
<keyword id="KW-0645">Protease</keyword>
<keyword id="KW-1185">Reference proteome</keyword>
<keyword id="KW-0812">Transmembrane</keyword>
<keyword id="KW-1133">Transmembrane helix</keyword>